<gene>
    <name type="primary">SYT3</name>
</gene>
<evidence type="ECO:0000250" key="1">
    <source>
        <dbReference type="UniProtKB" id="O35681"/>
    </source>
</evidence>
<evidence type="ECO:0000250" key="2">
    <source>
        <dbReference type="UniProtKB" id="P40748"/>
    </source>
</evidence>
<evidence type="ECO:0000255" key="3"/>
<evidence type="ECO:0000255" key="4">
    <source>
        <dbReference type="PROSITE-ProRule" id="PRU00041"/>
    </source>
</evidence>
<evidence type="ECO:0000256" key="5">
    <source>
        <dbReference type="SAM" id="MobiDB-lite"/>
    </source>
</evidence>
<evidence type="ECO:0000269" key="6">
    <source>
    </source>
</evidence>
<evidence type="ECO:0000269" key="7">
    <source>
    </source>
</evidence>
<evidence type="ECO:0000305" key="8"/>
<dbReference type="EMBL" id="AL136594">
    <property type="protein sequence ID" value="CAB66529.1"/>
    <property type="molecule type" value="mRNA"/>
</dbReference>
<dbReference type="EMBL" id="BC028379">
    <property type="protein sequence ID" value="AAH28379.1"/>
    <property type="molecule type" value="mRNA"/>
</dbReference>
<dbReference type="EMBL" id="BC031067">
    <property type="protein sequence ID" value="AAH31067.1"/>
    <property type="molecule type" value="mRNA"/>
</dbReference>
<dbReference type="CCDS" id="CCDS12798.1"/>
<dbReference type="RefSeq" id="NP_001153800.1">
    <property type="nucleotide sequence ID" value="NM_001160328.2"/>
</dbReference>
<dbReference type="RefSeq" id="NP_001153801.1">
    <property type="nucleotide sequence ID" value="NM_001160329.2"/>
</dbReference>
<dbReference type="RefSeq" id="NP_001411273.1">
    <property type="nucleotide sequence ID" value="NM_001424344.1"/>
</dbReference>
<dbReference type="RefSeq" id="NP_001411274.1">
    <property type="nucleotide sequence ID" value="NM_001424345.1"/>
</dbReference>
<dbReference type="RefSeq" id="NP_001411275.1">
    <property type="nucleotide sequence ID" value="NM_001424346.1"/>
</dbReference>
<dbReference type="RefSeq" id="NP_001411276.1">
    <property type="nucleotide sequence ID" value="NM_001424347.1"/>
</dbReference>
<dbReference type="RefSeq" id="NP_001411277.1">
    <property type="nucleotide sequence ID" value="NM_001424348.1"/>
</dbReference>
<dbReference type="RefSeq" id="NP_001411278.1">
    <property type="nucleotide sequence ID" value="NM_001424349.1"/>
</dbReference>
<dbReference type="RefSeq" id="NP_001411279.1">
    <property type="nucleotide sequence ID" value="NM_001424350.1"/>
</dbReference>
<dbReference type="RefSeq" id="NP_115674.1">
    <property type="nucleotide sequence ID" value="NM_032298.3"/>
</dbReference>
<dbReference type="RefSeq" id="XP_011525692.1">
    <property type="nucleotide sequence ID" value="XM_011527390.2"/>
</dbReference>
<dbReference type="RefSeq" id="XP_011525693.1">
    <property type="nucleotide sequence ID" value="XM_011527391.2"/>
</dbReference>
<dbReference type="SMR" id="Q9BQG1"/>
<dbReference type="BioGRID" id="123985">
    <property type="interactions" value="21"/>
</dbReference>
<dbReference type="ELM" id="Q9BQG1"/>
<dbReference type="FunCoup" id="Q9BQG1">
    <property type="interactions" value="160"/>
</dbReference>
<dbReference type="IntAct" id="Q9BQG1">
    <property type="interactions" value="19"/>
</dbReference>
<dbReference type="STRING" id="9606.ENSP00000340914"/>
<dbReference type="GlyGen" id="Q9BQG1">
    <property type="glycosylation" value="1 site, 1 O-linked glycan (1 site)"/>
</dbReference>
<dbReference type="iPTMnet" id="Q9BQG1"/>
<dbReference type="PhosphoSitePlus" id="Q9BQG1"/>
<dbReference type="BioMuta" id="SYT3"/>
<dbReference type="DMDM" id="18202733"/>
<dbReference type="MassIVE" id="Q9BQG1"/>
<dbReference type="PaxDb" id="9606-ENSP00000340914"/>
<dbReference type="PeptideAtlas" id="Q9BQG1"/>
<dbReference type="ProteomicsDB" id="78676"/>
<dbReference type="ABCD" id="Q9BQG1">
    <property type="antibodies" value="1 sequenced antibody"/>
</dbReference>
<dbReference type="Antibodypedia" id="32348">
    <property type="antibodies" value="206 antibodies from 27 providers"/>
</dbReference>
<dbReference type="DNASU" id="84258"/>
<dbReference type="Ensembl" id="ENST00000338916.8">
    <property type="protein sequence ID" value="ENSP00000340914.3"/>
    <property type="gene ID" value="ENSG00000213023.11"/>
</dbReference>
<dbReference type="Ensembl" id="ENST00000593901.5">
    <property type="protein sequence ID" value="ENSP00000468982.1"/>
    <property type="gene ID" value="ENSG00000213023.11"/>
</dbReference>
<dbReference type="Ensembl" id="ENST00000600079.6">
    <property type="protein sequence ID" value="ENSP00000469398.1"/>
    <property type="gene ID" value="ENSG00000213023.11"/>
</dbReference>
<dbReference type="GeneID" id="84258"/>
<dbReference type="KEGG" id="hsa:84258"/>
<dbReference type="MANE-Select" id="ENST00000600079.6">
    <property type="protein sequence ID" value="ENSP00000469398.1"/>
    <property type="RefSeq nucleotide sequence ID" value="NM_001160329.2"/>
    <property type="RefSeq protein sequence ID" value="NP_001153801.1"/>
</dbReference>
<dbReference type="UCSC" id="uc002pst.3">
    <property type="organism name" value="human"/>
</dbReference>
<dbReference type="AGR" id="HGNC:11511"/>
<dbReference type="CTD" id="84258"/>
<dbReference type="DisGeNET" id="84258"/>
<dbReference type="GeneCards" id="SYT3"/>
<dbReference type="HGNC" id="HGNC:11511">
    <property type="gene designation" value="SYT3"/>
</dbReference>
<dbReference type="HPA" id="ENSG00000213023">
    <property type="expression patterns" value="Tissue enriched (brain)"/>
</dbReference>
<dbReference type="MIM" id="600327">
    <property type="type" value="gene"/>
</dbReference>
<dbReference type="neXtProt" id="NX_Q9BQG1"/>
<dbReference type="OpenTargets" id="ENSG00000213023"/>
<dbReference type="PharmGKB" id="PA36292"/>
<dbReference type="VEuPathDB" id="HostDB:ENSG00000213023"/>
<dbReference type="eggNOG" id="KOG1028">
    <property type="taxonomic scope" value="Eukaryota"/>
</dbReference>
<dbReference type="GeneTree" id="ENSGT00940000161770"/>
<dbReference type="HOGENOM" id="CLU_023008_8_3_1"/>
<dbReference type="InParanoid" id="Q9BQG1"/>
<dbReference type="OMA" id="SHNERCD"/>
<dbReference type="OrthoDB" id="67700at2759"/>
<dbReference type="PAN-GO" id="Q9BQG1">
    <property type="GO annotations" value="11 GO annotations based on evolutionary models"/>
</dbReference>
<dbReference type="PhylomeDB" id="Q9BQG1"/>
<dbReference type="TreeFam" id="TF315600"/>
<dbReference type="PathwayCommons" id="Q9BQG1"/>
<dbReference type="SignaLink" id="Q9BQG1"/>
<dbReference type="BioGRID-ORCS" id="84258">
    <property type="hits" value="20 hits in 1149 CRISPR screens"/>
</dbReference>
<dbReference type="GeneWiki" id="SYT3"/>
<dbReference type="GenomeRNAi" id="84258"/>
<dbReference type="Pharos" id="Q9BQG1">
    <property type="development level" value="Tbio"/>
</dbReference>
<dbReference type="PRO" id="PR:Q9BQG1"/>
<dbReference type="Proteomes" id="UP000005640">
    <property type="component" value="Chromosome 19"/>
</dbReference>
<dbReference type="RNAct" id="Q9BQG1">
    <property type="molecule type" value="protein"/>
</dbReference>
<dbReference type="Bgee" id="ENSG00000213023">
    <property type="expression patterns" value="Expressed in primary visual cortex and 84 other cell types or tissues"/>
</dbReference>
<dbReference type="ExpressionAtlas" id="Q9BQG1">
    <property type="expression patterns" value="baseline and differential"/>
</dbReference>
<dbReference type="GO" id="GO:0005768">
    <property type="term" value="C:endosome"/>
    <property type="evidence" value="ECO:0000314"/>
    <property type="project" value="LIFEdb"/>
</dbReference>
<dbReference type="GO" id="GO:0070382">
    <property type="term" value="C:exocytic vesicle"/>
    <property type="evidence" value="ECO:0000318"/>
    <property type="project" value="GO_Central"/>
</dbReference>
<dbReference type="GO" id="GO:0005886">
    <property type="term" value="C:plasma membrane"/>
    <property type="evidence" value="ECO:0000318"/>
    <property type="project" value="GO_Central"/>
</dbReference>
<dbReference type="GO" id="GO:0045202">
    <property type="term" value="C:synapse"/>
    <property type="evidence" value="ECO:0007669"/>
    <property type="project" value="GOC"/>
</dbReference>
<dbReference type="GO" id="GO:0030658">
    <property type="term" value="C:transport vesicle membrane"/>
    <property type="evidence" value="ECO:0007669"/>
    <property type="project" value="UniProtKB-SubCell"/>
</dbReference>
<dbReference type="GO" id="GO:0061891">
    <property type="term" value="F:calcium ion sensor activity"/>
    <property type="evidence" value="ECO:0000318"/>
    <property type="project" value="GO_Central"/>
</dbReference>
<dbReference type="GO" id="GO:0005544">
    <property type="term" value="F:calcium-dependent phospholipid binding"/>
    <property type="evidence" value="ECO:0000318"/>
    <property type="project" value="GO_Central"/>
</dbReference>
<dbReference type="GO" id="GO:0046872">
    <property type="term" value="F:metal ion binding"/>
    <property type="evidence" value="ECO:0007669"/>
    <property type="project" value="UniProtKB-KW"/>
</dbReference>
<dbReference type="GO" id="GO:0000149">
    <property type="term" value="F:SNARE binding"/>
    <property type="evidence" value="ECO:0000318"/>
    <property type="project" value="GO_Central"/>
</dbReference>
<dbReference type="GO" id="GO:0030154">
    <property type="term" value="P:cell differentiation"/>
    <property type="evidence" value="ECO:0007669"/>
    <property type="project" value="UniProtKB-KW"/>
</dbReference>
<dbReference type="GO" id="GO:0007268">
    <property type="term" value="P:chemical synaptic transmission"/>
    <property type="evidence" value="ECO:0000318"/>
    <property type="project" value="GO_Central"/>
</dbReference>
<dbReference type="GO" id="GO:1903861">
    <property type="term" value="P:positive regulation of dendrite extension"/>
    <property type="evidence" value="ECO:0000314"/>
    <property type="project" value="UniProtKB"/>
</dbReference>
<dbReference type="GO" id="GO:0031340">
    <property type="term" value="P:positive regulation of vesicle fusion"/>
    <property type="evidence" value="ECO:0000318"/>
    <property type="project" value="GO_Central"/>
</dbReference>
<dbReference type="GO" id="GO:0017158">
    <property type="term" value="P:regulation of calcium ion-dependent exocytosis"/>
    <property type="evidence" value="ECO:0000318"/>
    <property type="project" value="GO_Central"/>
</dbReference>
<dbReference type="GO" id="GO:0016192">
    <property type="term" value="P:vesicle-mediated transport"/>
    <property type="evidence" value="ECO:0000318"/>
    <property type="project" value="GO_Central"/>
</dbReference>
<dbReference type="CDD" id="cd08385">
    <property type="entry name" value="C2A_Synaptotagmin-1-5-6-9-10"/>
    <property type="match status" value="1"/>
</dbReference>
<dbReference type="CDD" id="cd08403">
    <property type="entry name" value="C2B_Synaptotagmin-3-5-6-9-10"/>
    <property type="match status" value="1"/>
</dbReference>
<dbReference type="FunFam" id="2.60.40.150:FF:000005">
    <property type="entry name" value="Synaptotagmin 6"/>
    <property type="match status" value="1"/>
</dbReference>
<dbReference type="FunFam" id="2.60.40.150:FF:000011">
    <property type="entry name" value="Synaptotagmin 6"/>
    <property type="match status" value="1"/>
</dbReference>
<dbReference type="Gene3D" id="2.60.40.150">
    <property type="entry name" value="C2 domain"/>
    <property type="match status" value="2"/>
</dbReference>
<dbReference type="InterPro" id="IPR000008">
    <property type="entry name" value="C2_dom"/>
</dbReference>
<dbReference type="InterPro" id="IPR035892">
    <property type="entry name" value="C2_domain_sf"/>
</dbReference>
<dbReference type="InterPro" id="IPR001565">
    <property type="entry name" value="Synaptotagmin"/>
</dbReference>
<dbReference type="PANTHER" id="PTHR10024">
    <property type="entry name" value="SYNAPTOTAGMIN"/>
    <property type="match status" value="1"/>
</dbReference>
<dbReference type="PANTHER" id="PTHR10024:SF176">
    <property type="entry name" value="SYNAPTOTAGMIN-3"/>
    <property type="match status" value="1"/>
</dbReference>
<dbReference type="Pfam" id="PF00168">
    <property type="entry name" value="C2"/>
    <property type="match status" value="2"/>
</dbReference>
<dbReference type="PRINTS" id="PR00360">
    <property type="entry name" value="C2DOMAIN"/>
</dbReference>
<dbReference type="PRINTS" id="PR00399">
    <property type="entry name" value="SYNAPTOTAGMN"/>
</dbReference>
<dbReference type="SMART" id="SM00239">
    <property type="entry name" value="C2"/>
    <property type="match status" value="2"/>
</dbReference>
<dbReference type="SUPFAM" id="SSF49562">
    <property type="entry name" value="C2 domain (Calcium/lipid-binding domain, CaLB)"/>
    <property type="match status" value="2"/>
</dbReference>
<dbReference type="PROSITE" id="PS50004">
    <property type="entry name" value="C2"/>
    <property type="match status" value="2"/>
</dbReference>
<sequence>MSGDYEDDLCRRALILVSDLCARVRDADTNDRCQEFNDRIRGYPRGPDADISVSLLSVIVTFCGIVLLGVSLFVSWKLCWVPWRDKGGSAVGGGPLRKDLGPGVGLAGLVGGGGHHLAAGLGGHPLLGGPHHHAHAAHHPPFAELLEPGSLGGSDTPEPSYLDMDSYPEAAAAAVAAGVKPSQTSPELPSEGGAGSGLLLLPPSGGGLPSAQSHQQVTSLAPTTRYPALPRPLTQQTLTSQPDPSSEERPPALPLPLPGGEEKAKLIGQIKPELYQGTGPGGRRSGGGPGSGEAGTGAPCGRISFALRYLYGSDQLVVRILQALDLPAKDSNGFSDPYVKIYLLPDRKKKFQTKVHRKTLNPVFNETFQFSVPLAELAQRKLHFSVYDFDRFSRHDLIGQVVLDNLLELAEQPPDRPLWRDIVEGGSEKADLGELNFSLCYLPTAGRLTVTIIKASNLKAMDLTGFSDPYVKASLISEGRRLKKRKTSIKKNTLNPTYNEALVFDVAPESVENVGLSIAVVDYDCIGHNEVIGVCRVGPDAADPHGREHWAEMLANPRKPVEHWHQLVEEKTVTSFTKGSKGLSEKENSE</sequence>
<name>SYT3_HUMAN</name>
<reference key="1">
    <citation type="journal article" date="2001" name="Genome Res.">
        <title>Towards a catalog of human genes and proteins: sequencing and analysis of 500 novel complete protein coding human cDNAs.</title>
        <authorList>
            <person name="Wiemann S."/>
            <person name="Weil B."/>
            <person name="Wellenreuther R."/>
            <person name="Gassenhuber J."/>
            <person name="Glassl S."/>
            <person name="Ansorge W."/>
            <person name="Boecher M."/>
            <person name="Bloecker H."/>
            <person name="Bauersachs S."/>
            <person name="Blum H."/>
            <person name="Lauber J."/>
            <person name="Duesterhoeft A."/>
            <person name="Beyer A."/>
            <person name="Koehrer K."/>
            <person name="Strack N."/>
            <person name="Mewes H.-W."/>
            <person name="Ottenwaelder B."/>
            <person name="Obermaier B."/>
            <person name="Tampe J."/>
            <person name="Heubner D."/>
            <person name="Wambutt R."/>
            <person name="Korn B."/>
            <person name="Klein M."/>
            <person name="Poustka A."/>
        </authorList>
    </citation>
    <scope>NUCLEOTIDE SEQUENCE [LARGE SCALE MRNA]</scope>
    <source>
        <tissue>Amygdala</tissue>
    </source>
</reference>
<reference key="2">
    <citation type="journal article" date="2004" name="Genome Res.">
        <title>The status, quality, and expansion of the NIH full-length cDNA project: the Mammalian Gene Collection (MGC).</title>
        <authorList>
            <consortium name="The MGC Project Team"/>
        </authorList>
    </citation>
    <scope>NUCLEOTIDE SEQUENCE [LARGE SCALE MRNA]</scope>
    <source>
        <tissue>Brain</tissue>
    </source>
</reference>
<reference key="3">
    <citation type="journal article" date="2013" name="J. Dermatol. Sci.">
        <title>SYT14L, especially its C2 domain, is involved in regulating melanocyte differentiation.</title>
        <authorList>
            <person name="Yoo J.C."/>
            <person name="Lim T.Y."/>
            <person name="Park J.S."/>
            <person name="Hah Y.S."/>
            <person name="Park N."/>
            <person name="Hong S.G."/>
            <person name="Park J.Y."/>
            <person name="Yoon T.J."/>
        </authorList>
    </citation>
    <scope>FUNCTION</scope>
    <scope>TISSUE SPECIFICITY</scope>
</reference>
<reference key="4">
    <citation type="journal article" date="2006" name="Science">
        <title>The consensus coding sequences of human breast and colorectal cancers.</title>
        <authorList>
            <person name="Sjoeblom T."/>
            <person name="Jones S."/>
            <person name="Wood L.D."/>
            <person name="Parsons D.W."/>
            <person name="Lin J."/>
            <person name="Barber T.D."/>
            <person name="Mandelker D."/>
            <person name="Leary R.J."/>
            <person name="Ptak J."/>
            <person name="Silliman N."/>
            <person name="Szabo S."/>
            <person name="Buckhaults P."/>
            <person name="Farrell C."/>
            <person name="Meeh P."/>
            <person name="Markowitz S.D."/>
            <person name="Willis J."/>
            <person name="Dawson D."/>
            <person name="Willson J.K.V."/>
            <person name="Gazdar A.F."/>
            <person name="Hartigan J."/>
            <person name="Wu L."/>
            <person name="Liu C."/>
            <person name="Parmigiani G."/>
            <person name="Park B.H."/>
            <person name="Bachman K.E."/>
            <person name="Papadopoulos N."/>
            <person name="Vogelstein B."/>
            <person name="Kinzler K.W."/>
            <person name="Velculescu V.E."/>
        </authorList>
    </citation>
    <scope>VARIANT [LARGE SCALE ANALYSIS] PHE-474</scope>
</reference>
<organism>
    <name type="scientific">Homo sapiens</name>
    <name type="common">Human</name>
    <dbReference type="NCBI Taxonomy" id="9606"/>
    <lineage>
        <taxon>Eukaryota</taxon>
        <taxon>Metazoa</taxon>
        <taxon>Chordata</taxon>
        <taxon>Craniata</taxon>
        <taxon>Vertebrata</taxon>
        <taxon>Euteleostomi</taxon>
        <taxon>Mammalia</taxon>
        <taxon>Eutheria</taxon>
        <taxon>Euarchontoglires</taxon>
        <taxon>Primates</taxon>
        <taxon>Haplorrhini</taxon>
        <taxon>Catarrhini</taxon>
        <taxon>Hominidae</taxon>
        <taxon>Homo</taxon>
    </lineage>
</organism>
<protein>
    <recommendedName>
        <fullName>Synaptotagmin-3</fullName>
    </recommendedName>
    <alternativeName>
        <fullName>Synaptotagmin III</fullName>
        <shortName>SytIII</shortName>
    </alternativeName>
</protein>
<accession>Q9BQG1</accession>
<accession>Q8N5Z1</accession>
<accession>Q8N640</accession>
<feature type="chain" id="PRO_0000183945" description="Synaptotagmin-3">
    <location>
        <begin position="1"/>
        <end position="590"/>
    </location>
</feature>
<feature type="topological domain" description="Vesicular" evidence="3">
    <location>
        <begin position="1"/>
        <end position="54"/>
    </location>
</feature>
<feature type="transmembrane region" description="Helical" evidence="3">
    <location>
        <begin position="55"/>
        <end position="75"/>
    </location>
</feature>
<feature type="topological domain" description="Cytoplasmic" evidence="3">
    <location>
        <begin position="76"/>
        <end position="590"/>
    </location>
</feature>
<feature type="domain" description="C2 1" evidence="4">
    <location>
        <begin position="299"/>
        <end position="420"/>
    </location>
</feature>
<feature type="domain" description="C2 2" evidence="4">
    <location>
        <begin position="431"/>
        <end position="565"/>
    </location>
</feature>
<feature type="region of interest" description="Cysteine motif" evidence="1">
    <location>
        <begin position="10"/>
        <end position="34"/>
    </location>
</feature>
<feature type="region of interest" description="Disordered" evidence="5">
    <location>
        <begin position="143"/>
        <end position="220"/>
    </location>
</feature>
<feature type="region of interest" description="Disordered" evidence="5">
    <location>
        <begin position="234"/>
        <end position="260"/>
    </location>
</feature>
<feature type="region of interest" description="Disordered" evidence="5">
    <location>
        <begin position="273"/>
        <end position="295"/>
    </location>
</feature>
<feature type="compositionally biased region" description="Low complexity" evidence="5">
    <location>
        <begin position="185"/>
        <end position="203"/>
    </location>
</feature>
<feature type="compositionally biased region" description="Polar residues" evidence="5">
    <location>
        <begin position="234"/>
        <end position="243"/>
    </location>
</feature>
<feature type="compositionally biased region" description="Gly residues" evidence="5">
    <location>
        <begin position="278"/>
        <end position="295"/>
    </location>
</feature>
<feature type="binding site" evidence="4">
    <location>
        <position position="330"/>
    </location>
    <ligand>
        <name>Ca(2+)</name>
        <dbReference type="ChEBI" id="CHEBI:29108"/>
        <label>1</label>
    </ligand>
</feature>
<feature type="binding site" evidence="4">
    <location>
        <position position="330"/>
    </location>
    <ligand>
        <name>Ca(2+)</name>
        <dbReference type="ChEBI" id="CHEBI:29108"/>
        <label>2</label>
    </ligand>
</feature>
<feature type="binding site" evidence="4">
    <location>
        <position position="336"/>
    </location>
    <ligand>
        <name>Ca(2+)</name>
        <dbReference type="ChEBI" id="CHEBI:29108"/>
        <label>1</label>
    </ligand>
</feature>
<feature type="binding site" evidence="4">
    <location>
        <position position="388"/>
    </location>
    <ligand>
        <name>Ca(2+)</name>
        <dbReference type="ChEBI" id="CHEBI:29108"/>
        <label>1</label>
    </ligand>
</feature>
<feature type="binding site" evidence="4">
    <location>
        <position position="388"/>
    </location>
    <ligand>
        <name>Ca(2+)</name>
        <dbReference type="ChEBI" id="CHEBI:29108"/>
        <label>2</label>
    </ligand>
</feature>
<feature type="binding site" evidence="4">
    <location>
        <position position="389"/>
    </location>
    <ligand>
        <name>Ca(2+)</name>
        <dbReference type="ChEBI" id="CHEBI:29108"/>
        <label>1</label>
    </ligand>
</feature>
<feature type="binding site" evidence="4">
    <location>
        <position position="390"/>
    </location>
    <ligand>
        <name>Ca(2+)</name>
        <dbReference type="ChEBI" id="CHEBI:29108"/>
        <label>1</label>
    </ligand>
</feature>
<feature type="binding site" evidence="4">
    <location>
        <position position="390"/>
    </location>
    <ligand>
        <name>Ca(2+)</name>
        <dbReference type="ChEBI" id="CHEBI:29108"/>
        <label>2</label>
    </ligand>
</feature>
<feature type="binding site" evidence="4">
    <location>
        <position position="390"/>
    </location>
    <ligand>
        <name>Ca(2+)</name>
        <dbReference type="ChEBI" id="CHEBI:29108"/>
        <label>3</label>
    </ligand>
</feature>
<feature type="binding site" evidence="4">
    <location>
        <position position="393"/>
    </location>
    <ligand>
        <name>Ca(2+)</name>
        <dbReference type="ChEBI" id="CHEBI:29108"/>
        <label>3</label>
    </ligand>
</feature>
<feature type="binding site" evidence="4">
    <location>
        <position position="396"/>
    </location>
    <ligand>
        <name>Ca(2+)</name>
        <dbReference type="ChEBI" id="CHEBI:29108"/>
        <label>2</label>
    </ligand>
</feature>
<feature type="binding site" evidence="4">
    <location>
        <position position="396"/>
    </location>
    <ligand>
        <name>Ca(2+)</name>
        <dbReference type="ChEBI" id="CHEBI:29108"/>
        <label>3</label>
    </ligand>
</feature>
<feature type="binding site" evidence="4">
    <location>
        <position position="462"/>
    </location>
    <ligand>
        <name>Ca(2+)</name>
        <dbReference type="ChEBI" id="CHEBI:29108"/>
        <label>4</label>
    </ligand>
</feature>
<feature type="binding site" evidence="4">
    <location>
        <position position="468"/>
    </location>
    <ligand>
        <name>Ca(2+)</name>
        <dbReference type="ChEBI" id="CHEBI:29108"/>
        <label>4</label>
    </ligand>
</feature>
<feature type="binding site" evidence="4">
    <location>
        <position position="522"/>
    </location>
    <ligand>
        <name>Ca(2+)</name>
        <dbReference type="ChEBI" id="CHEBI:29108"/>
        <label>4</label>
    </ligand>
</feature>
<feature type="binding site" evidence="4">
    <location>
        <position position="524"/>
    </location>
    <ligand>
        <name>Ca(2+)</name>
        <dbReference type="ChEBI" id="CHEBI:29108"/>
        <label>4</label>
    </ligand>
</feature>
<feature type="modified residue" description="Omega-N-methylarginine" evidence="1">
    <location>
        <position position="284"/>
    </location>
</feature>
<feature type="sequence variant" id="VAR_036389" description="In a breast cancer sample; somatic mutation." evidence="6">
    <original>S</original>
    <variation>F</variation>
    <location>
        <position position="474"/>
    </location>
</feature>
<feature type="sequence conflict" description="In Ref. 2; AAH31067." evidence="8" ref="2">
    <original>P</original>
    <variation>H</variation>
    <location>
        <position position="82"/>
    </location>
</feature>
<feature type="sequence conflict" description="In Ref. 2; AAH28379." evidence="8" ref="2">
    <original>L</original>
    <variation>M</variation>
    <location>
        <position position="324"/>
    </location>
</feature>
<proteinExistence type="evidence at protein level"/>
<keyword id="KW-0106">Calcium</keyword>
<keyword id="KW-1003">Cell membrane</keyword>
<keyword id="KW-0968">Cytoplasmic vesicle</keyword>
<keyword id="KW-0221">Differentiation</keyword>
<keyword id="KW-1015">Disulfide bond</keyword>
<keyword id="KW-0472">Membrane</keyword>
<keyword id="KW-0479">Metal-binding</keyword>
<keyword id="KW-0488">Methylation</keyword>
<keyword id="KW-1267">Proteomics identification</keyword>
<keyword id="KW-1185">Reference proteome</keyword>
<keyword id="KW-0677">Repeat</keyword>
<keyword id="KW-0812">Transmembrane</keyword>
<keyword id="KW-1133">Transmembrane helix</keyword>
<comment type="function">
    <text evidence="2 7">Ca(2+) sensor involved in Ca(2+)-dependent exocytosis of secretory vesicles through Ca(2+) and phospholipid binding to the C2 domain. Ca(2+) induces binding of the C2-domains to phospholipid membranes and to assembled SNARE-complexes; both actions contribute to triggering exocytosis (By similarity). Plays a role in dendrite formation by melanocytes (PubMed:23999003).</text>
</comment>
<comment type="cofactor">
    <cofactor evidence="4">
        <name>Ca(2+)</name>
        <dbReference type="ChEBI" id="CHEBI:29108"/>
    </cofactor>
    <text evidence="2">Binds 3 Ca(2+) ions per subunit. The ions are bound to the C2 domains.</text>
</comment>
<comment type="subunit">
    <text evidence="1">Homodimer; disulfide-linked via the cysteine motif. Can also form heterodimers with SYT6, SYT9 and SYT10.</text>
</comment>
<comment type="interaction">
    <interactant intactId="EBI-17284568">
        <id>Q9BQG1</id>
    </interactant>
    <interactant intactId="EBI-2115097">
        <id>P07339</id>
        <label>CTSD</label>
    </interactant>
    <organismsDiffer>false</organismsDiffer>
    <experiments>3</experiments>
</comment>
<comment type="interaction">
    <interactant intactId="EBI-17284568">
        <id>Q9BQG1</id>
    </interactant>
    <interactant intactId="EBI-466029">
        <id>P42858</id>
        <label>HTT</label>
    </interactant>
    <organismsDiffer>false</organismsDiffer>
    <experiments>12</experiments>
</comment>
<comment type="interaction">
    <interactant intactId="EBI-17284568">
        <id>Q9BQG1</id>
    </interactant>
    <interactant intactId="EBI-12017638">
        <id>P48051</id>
        <label>KCNJ6</label>
    </interactant>
    <organismsDiffer>false</organismsDiffer>
    <experiments>3</experiments>
</comment>
<comment type="interaction">
    <interactant intactId="EBI-17284568">
        <id>Q9BQG1</id>
    </interactant>
    <interactant intactId="EBI-5454865">
        <id>Q6IN84</id>
        <label>MRM1</label>
    </interactant>
    <organismsDiffer>false</organismsDiffer>
    <experiments>3</experiments>
</comment>
<comment type="interaction">
    <interactant intactId="EBI-17284568">
        <id>Q9BQG1</id>
    </interactant>
    <interactant intactId="EBI-475646">
        <id>P07196</id>
        <label>NEFL</label>
    </interactant>
    <organismsDiffer>false</organismsDiffer>
    <experiments>3</experiments>
</comment>
<comment type="interaction">
    <interactant intactId="EBI-17284568">
        <id>Q9BQG1</id>
    </interactant>
    <interactant intactId="EBI-396669">
        <id>Q9Y3C5</id>
        <label>RNF11</label>
    </interactant>
    <organismsDiffer>false</organismsDiffer>
    <experiments>3</experiments>
</comment>
<comment type="interaction">
    <interactant intactId="EBI-17284568">
        <id>Q9BQG1</id>
    </interactant>
    <interactant intactId="EBI-720609">
        <id>O76024</id>
        <label>WFS1</label>
    </interactant>
    <organismsDiffer>false</organismsDiffer>
    <experiments>3</experiments>
</comment>
<comment type="subcellular location">
    <subcellularLocation>
        <location evidence="2">Cell membrane</location>
        <topology evidence="3">Single-pass membrane protein</topology>
    </subcellularLocation>
    <subcellularLocation>
        <location evidence="8">Cytoplasmic vesicle</location>
        <location evidence="8">Secretory vesicle membrane</location>
        <topology evidence="3">Single-pass membrane protein</topology>
    </subcellularLocation>
</comment>
<comment type="tissue specificity">
    <text evidence="7">Expressed in melanocytes (PubMed:23999003).</text>
</comment>
<comment type="domain">
    <text evidence="1">The cysteine motif mediates homo- or heterodimer formation via formation of disulfide bonds.</text>
</comment>
<comment type="domain">
    <text evidence="2">The first C2 domain mediates Ca(2+)-dependent phospholipid binding.</text>
</comment>
<comment type="similarity">
    <text evidence="8">Belongs to the synaptotagmin family.</text>
</comment>